<comment type="function">
    <text evidence="1">Catalyzes the ATP-dependent phosphorylation of L-homoserine to L-homoserine phosphate.</text>
</comment>
<comment type="catalytic activity">
    <reaction evidence="1">
        <text>L-homoserine + ATP = O-phospho-L-homoserine + ADP + H(+)</text>
        <dbReference type="Rhea" id="RHEA:13985"/>
        <dbReference type="ChEBI" id="CHEBI:15378"/>
        <dbReference type="ChEBI" id="CHEBI:30616"/>
        <dbReference type="ChEBI" id="CHEBI:57476"/>
        <dbReference type="ChEBI" id="CHEBI:57590"/>
        <dbReference type="ChEBI" id="CHEBI:456216"/>
        <dbReference type="EC" id="2.7.1.39"/>
    </reaction>
</comment>
<comment type="pathway">
    <text evidence="1">Amino-acid biosynthesis; L-threonine biosynthesis; L-threonine from L-aspartate: step 4/5.</text>
</comment>
<comment type="subcellular location">
    <subcellularLocation>
        <location evidence="1">Cytoplasm</location>
    </subcellularLocation>
</comment>
<comment type="similarity">
    <text evidence="1">Belongs to the GHMP kinase family. Homoserine kinase subfamily.</text>
</comment>
<accession>Q73X44</accession>
<proteinExistence type="inferred from homology"/>
<reference key="1">
    <citation type="journal article" date="2005" name="Proc. Natl. Acad. Sci. U.S.A.">
        <title>The complete genome sequence of Mycobacterium avium subspecies paratuberculosis.</title>
        <authorList>
            <person name="Li L."/>
            <person name="Bannantine J.P."/>
            <person name="Zhang Q."/>
            <person name="Amonsin A."/>
            <person name="May B.J."/>
            <person name="Alt D."/>
            <person name="Banerji N."/>
            <person name="Kanjilal S."/>
            <person name="Kapur V."/>
        </authorList>
    </citation>
    <scope>NUCLEOTIDE SEQUENCE [LARGE SCALE GENOMIC DNA]</scope>
    <source>
        <strain>ATCC BAA-968 / K-10</strain>
    </source>
</reference>
<dbReference type="EC" id="2.7.1.39" evidence="1"/>
<dbReference type="EMBL" id="AE016958">
    <property type="protein sequence ID" value="AAS04783.1"/>
    <property type="molecule type" value="Genomic_DNA"/>
</dbReference>
<dbReference type="SMR" id="Q73X44"/>
<dbReference type="STRING" id="262316.MAP_2466c"/>
<dbReference type="KEGG" id="mpa:MAP_2466c"/>
<dbReference type="eggNOG" id="COG0083">
    <property type="taxonomic scope" value="Bacteria"/>
</dbReference>
<dbReference type="HOGENOM" id="CLU_041243_0_1_11"/>
<dbReference type="UniPathway" id="UPA00050">
    <property type="reaction ID" value="UER00064"/>
</dbReference>
<dbReference type="Proteomes" id="UP000000580">
    <property type="component" value="Chromosome"/>
</dbReference>
<dbReference type="GO" id="GO:0005737">
    <property type="term" value="C:cytoplasm"/>
    <property type="evidence" value="ECO:0007669"/>
    <property type="project" value="UniProtKB-SubCell"/>
</dbReference>
<dbReference type="GO" id="GO:0005524">
    <property type="term" value="F:ATP binding"/>
    <property type="evidence" value="ECO:0007669"/>
    <property type="project" value="UniProtKB-UniRule"/>
</dbReference>
<dbReference type="GO" id="GO:0004413">
    <property type="term" value="F:homoserine kinase activity"/>
    <property type="evidence" value="ECO:0007669"/>
    <property type="project" value="UniProtKB-UniRule"/>
</dbReference>
<dbReference type="GO" id="GO:0009088">
    <property type="term" value="P:threonine biosynthetic process"/>
    <property type="evidence" value="ECO:0007669"/>
    <property type="project" value="UniProtKB-UniRule"/>
</dbReference>
<dbReference type="Gene3D" id="3.30.230.10">
    <property type="match status" value="1"/>
</dbReference>
<dbReference type="Gene3D" id="3.30.70.890">
    <property type="entry name" value="GHMP kinase, C-terminal domain"/>
    <property type="match status" value="1"/>
</dbReference>
<dbReference type="HAMAP" id="MF_00384">
    <property type="entry name" value="Homoser_kinase"/>
    <property type="match status" value="1"/>
</dbReference>
<dbReference type="InterPro" id="IPR013750">
    <property type="entry name" value="GHMP_kinase_C_dom"/>
</dbReference>
<dbReference type="InterPro" id="IPR036554">
    <property type="entry name" value="GHMP_kinase_C_sf"/>
</dbReference>
<dbReference type="InterPro" id="IPR006204">
    <property type="entry name" value="GHMP_kinase_N_dom"/>
</dbReference>
<dbReference type="InterPro" id="IPR006203">
    <property type="entry name" value="GHMP_knse_ATP-bd_CS"/>
</dbReference>
<dbReference type="InterPro" id="IPR000870">
    <property type="entry name" value="Homoserine_kinase"/>
</dbReference>
<dbReference type="InterPro" id="IPR020568">
    <property type="entry name" value="Ribosomal_Su5_D2-typ_SF"/>
</dbReference>
<dbReference type="InterPro" id="IPR014721">
    <property type="entry name" value="Ribsml_uS5_D2-typ_fold_subgr"/>
</dbReference>
<dbReference type="NCBIfam" id="TIGR00191">
    <property type="entry name" value="thrB"/>
    <property type="match status" value="1"/>
</dbReference>
<dbReference type="PANTHER" id="PTHR20861:SF1">
    <property type="entry name" value="HOMOSERINE KINASE"/>
    <property type="match status" value="1"/>
</dbReference>
<dbReference type="PANTHER" id="PTHR20861">
    <property type="entry name" value="HOMOSERINE/4-DIPHOSPHOCYTIDYL-2-C-METHYL-D-ERYTHRITOL KINASE"/>
    <property type="match status" value="1"/>
</dbReference>
<dbReference type="Pfam" id="PF08544">
    <property type="entry name" value="GHMP_kinases_C"/>
    <property type="match status" value="1"/>
</dbReference>
<dbReference type="Pfam" id="PF00288">
    <property type="entry name" value="GHMP_kinases_N"/>
    <property type="match status" value="1"/>
</dbReference>
<dbReference type="PIRSF" id="PIRSF000676">
    <property type="entry name" value="Homoser_kin"/>
    <property type="match status" value="1"/>
</dbReference>
<dbReference type="PRINTS" id="PR00958">
    <property type="entry name" value="HOMSERKINASE"/>
</dbReference>
<dbReference type="SUPFAM" id="SSF55060">
    <property type="entry name" value="GHMP Kinase, C-terminal domain"/>
    <property type="match status" value="1"/>
</dbReference>
<dbReference type="SUPFAM" id="SSF54211">
    <property type="entry name" value="Ribosomal protein S5 domain 2-like"/>
    <property type="match status" value="1"/>
</dbReference>
<dbReference type="PROSITE" id="PS00627">
    <property type="entry name" value="GHMP_KINASES_ATP"/>
    <property type="match status" value="1"/>
</dbReference>
<keyword id="KW-0028">Amino-acid biosynthesis</keyword>
<keyword id="KW-0067">ATP-binding</keyword>
<keyword id="KW-0963">Cytoplasm</keyword>
<keyword id="KW-0418">Kinase</keyword>
<keyword id="KW-0547">Nucleotide-binding</keyword>
<keyword id="KW-1185">Reference proteome</keyword>
<keyword id="KW-0791">Threonine biosynthesis</keyword>
<keyword id="KW-0808">Transferase</keyword>
<evidence type="ECO:0000255" key="1">
    <source>
        <dbReference type="HAMAP-Rule" id="MF_00384"/>
    </source>
</evidence>
<protein>
    <recommendedName>
        <fullName evidence="1">Homoserine kinase</fullName>
        <shortName evidence="1">HK</shortName>
        <shortName evidence="1">HSK</shortName>
        <ecNumber evidence="1">2.7.1.39</ecNumber>
    </recommendedName>
</protein>
<gene>
    <name evidence="1" type="primary">thrB</name>
    <name type="ordered locus">MAP_2466c</name>
</gene>
<organism>
    <name type="scientific">Mycolicibacterium paratuberculosis (strain ATCC BAA-968 / K-10)</name>
    <name type="common">Mycobacterium paratuberculosis</name>
    <dbReference type="NCBI Taxonomy" id="262316"/>
    <lineage>
        <taxon>Bacteria</taxon>
        <taxon>Bacillati</taxon>
        <taxon>Actinomycetota</taxon>
        <taxon>Actinomycetes</taxon>
        <taxon>Mycobacteriales</taxon>
        <taxon>Mycobacteriaceae</taxon>
        <taxon>Mycobacterium</taxon>
        <taxon>Mycobacterium avium complex (MAC)</taxon>
    </lineage>
</organism>
<feature type="chain" id="PRO_0000156589" description="Homoserine kinase">
    <location>
        <begin position="1"/>
        <end position="315"/>
    </location>
</feature>
<feature type="binding site" evidence="1">
    <location>
        <begin position="96"/>
        <end position="106"/>
    </location>
    <ligand>
        <name>ATP</name>
        <dbReference type="ChEBI" id="CHEBI:30616"/>
    </ligand>
</feature>
<sequence>MVTSMLPAGLVASAVVSASSANLGPGFDSIGLALSLIDEITVETTDSGLVVQVEGEGADQVPLGPEHLVVRAVECGLRAVGVRAAGLVVRCRNAIPHSRGLGSSAAAVVGGLAAANGLVAQANCQPLSDAALIQLSSEFEGHPDNAAAAVFGGAIVSWIDRGGQHPRYAAAPLRLHPDIHLYCAIPQERSLTAETRVLLPAQVSHEDARFNVSRAALLVVALTERPDLLMAATEDVLHQPQRAPAMPASAEYLRLLRRHNVAATLSGAGPSLIALTTASALPPEVMEYGAANGFTLAEMTAGEGVRWSPGVTVVG</sequence>
<name>KHSE_MYCPA</name>